<protein>
    <recommendedName>
        <fullName>Lysozyme C</fullName>
        <ecNumber>3.2.1.17</ecNumber>
    </recommendedName>
    <alternativeName>
        <fullName>1,4-beta-N-acetylmuramidase C</fullName>
    </alternativeName>
</protein>
<gene>
    <name type="primary">LYZ</name>
</gene>
<proteinExistence type="evidence at protein level"/>
<accession>Q7LZQ3</accession>
<name>LYSC_CRAFA</name>
<keyword id="KW-0929">Antimicrobial</keyword>
<keyword id="KW-0081">Bacteriolytic enzyme</keyword>
<keyword id="KW-0903">Direct protein sequencing</keyword>
<keyword id="KW-1015">Disulfide bond</keyword>
<keyword id="KW-0326">Glycosidase</keyword>
<keyword id="KW-0378">Hydrolase</keyword>
<keyword id="KW-0964">Secreted</keyword>
<evidence type="ECO:0000250" key="1"/>
<evidence type="ECO:0000255" key="2">
    <source>
        <dbReference type="PROSITE-ProRule" id="PRU00680"/>
    </source>
</evidence>
<reference key="1">
    <citation type="submission" date="1998-07" db="PIR data bank">
        <authorList>
            <person name="Araki T."/>
            <person name="Seki S."/>
            <person name="Torikata T."/>
        </authorList>
    </citation>
    <scope>PROTEIN SEQUENCE</scope>
</reference>
<organism>
    <name type="scientific">Crax fasciolata</name>
    <name type="common">Bare-faced curassow</name>
    <dbReference type="NCBI Taxonomy" id="84988"/>
    <lineage>
        <taxon>Eukaryota</taxon>
        <taxon>Metazoa</taxon>
        <taxon>Chordata</taxon>
        <taxon>Craniata</taxon>
        <taxon>Vertebrata</taxon>
        <taxon>Euteleostomi</taxon>
        <taxon>Archelosauria</taxon>
        <taxon>Archosauria</taxon>
        <taxon>Dinosauria</taxon>
        <taxon>Saurischia</taxon>
        <taxon>Theropoda</taxon>
        <taxon>Coelurosauria</taxon>
        <taxon>Aves</taxon>
        <taxon>Neognathae</taxon>
        <taxon>Galloanserae</taxon>
        <taxon>Galliformes</taxon>
        <taxon>Cracidae</taxon>
        <taxon>Crax</taxon>
    </lineage>
</organism>
<comment type="function">
    <text evidence="2">Lysozymes have primarily a bacteriolytic function; those in tissues and body fluids are associated with the monocyte-macrophage system and enhance the activity of immunoagents.</text>
</comment>
<comment type="catalytic activity">
    <reaction>
        <text>Hydrolysis of (1-&gt;4)-beta-linkages between N-acetylmuramic acid and N-acetyl-D-glucosamine residues in a peptidoglycan and between N-acetyl-D-glucosamine residues in chitodextrins.</text>
        <dbReference type="EC" id="3.2.1.17"/>
    </reaction>
</comment>
<comment type="subunit">
    <text evidence="1">Monomer.</text>
</comment>
<comment type="subcellular location">
    <subcellularLocation>
        <location>Secreted</location>
    </subcellularLocation>
</comment>
<comment type="miscellaneous">
    <text>Lysozyme C is capable of both hydrolysis and transglycosylation; it also shows a slight esterase activity. It acts rapidly on both peptide-substituted and unsubstituted peptidoglycan, and slowly on chitin oligosaccharides.</text>
</comment>
<comment type="similarity">
    <text evidence="2">Belongs to the glycosyl hydrolase 22 family.</text>
</comment>
<dbReference type="EC" id="3.2.1.17"/>
<dbReference type="PIR" id="JE0185">
    <property type="entry name" value="JE0185"/>
</dbReference>
<dbReference type="SMR" id="Q7LZQ3"/>
<dbReference type="CAZy" id="GH22">
    <property type="family name" value="Glycoside Hydrolase Family 22"/>
</dbReference>
<dbReference type="GO" id="GO:0005576">
    <property type="term" value="C:extracellular region"/>
    <property type="evidence" value="ECO:0007669"/>
    <property type="project" value="UniProtKB-SubCell"/>
</dbReference>
<dbReference type="GO" id="GO:0003796">
    <property type="term" value="F:lysozyme activity"/>
    <property type="evidence" value="ECO:0007669"/>
    <property type="project" value="UniProtKB-EC"/>
</dbReference>
<dbReference type="GO" id="GO:0050829">
    <property type="term" value="P:defense response to Gram-negative bacterium"/>
    <property type="evidence" value="ECO:0007669"/>
    <property type="project" value="TreeGrafter"/>
</dbReference>
<dbReference type="GO" id="GO:0050830">
    <property type="term" value="P:defense response to Gram-positive bacterium"/>
    <property type="evidence" value="ECO:0007669"/>
    <property type="project" value="TreeGrafter"/>
</dbReference>
<dbReference type="GO" id="GO:0031640">
    <property type="term" value="P:killing of cells of another organism"/>
    <property type="evidence" value="ECO:0007669"/>
    <property type="project" value="UniProtKB-KW"/>
</dbReference>
<dbReference type="CDD" id="cd16897">
    <property type="entry name" value="LYZ_C"/>
    <property type="match status" value="1"/>
</dbReference>
<dbReference type="FunFam" id="1.10.530.10:FF:000001">
    <property type="entry name" value="Lysozyme C"/>
    <property type="match status" value="1"/>
</dbReference>
<dbReference type="Gene3D" id="1.10.530.10">
    <property type="match status" value="1"/>
</dbReference>
<dbReference type="InterPro" id="IPR001916">
    <property type="entry name" value="Glyco_hydro_22"/>
</dbReference>
<dbReference type="InterPro" id="IPR019799">
    <property type="entry name" value="Glyco_hydro_22_CS"/>
</dbReference>
<dbReference type="InterPro" id="IPR000974">
    <property type="entry name" value="Glyco_hydro_22_lys"/>
</dbReference>
<dbReference type="InterPro" id="IPR023346">
    <property type="entry name" value="Lysozyme-like_dom_sf"/>
</dbReference>
<dbReference type="PANTHER" id="PTHR11407">
    <property type="entry name" value="LYSOZYME C"/>
    <property type="match status" value="1"/>
</dbReference>
<dbReference type="PANTHER" id="PTHR11407:SF28">
    <property type="entry name" value="LYSOZYME C"/>
    <property type="match status" value="1"/>
</dbReference>
<dbReference type="Pfam" id="PF00062">
    <property type="entry name" value="Lys"/>
    <property type="match status" value="1"/>
</dbReference>
<dbReference type="PRINTS" id="PR00137">
    <property type="entry name" value="LYSOZYME"/>
</dbReference>
<dbReference type="PRINTS" id="PR00135">
    <property type="entry name" value="LYZLACT"/>
</dbReference>
<dbReference type="SMART" id="SM00263">
    <property type="entry name" value="LYZ1"/>
    <property type="match status" value="1"/>
</dbReference>
<dbReference type="SUPFAM" id="SSF53955">
    <property type="entry name" value="Lysozyme-like"/>
    <property type="match status" value="1"/>
</dbReference>
<dbReference type="PROSITE" id="PS00128">
    <property type="entry name" value="GLYCOSYL_HYDROL_F22_1"/>
    <property type="match status" value="1"/>
</dbReference>
<dbReference type="PROSITE" id="PS51348">
    <property type="entry name" value="GLYCOSYL_HYDROL_F22_2"/>
    <property type="match status" value="1"/>
</dbReference>
<sequence length="129" mass="14453">KIYTRCELAAAMKRYGLDNYQGYSLGNWVCAARYESNYNTQATNRNSDGSTDYGILQINSRWWCNDGKTPGTRNLCHISCSALMGADIAPSVRCAKKIVSDGNGMNAWVAWRKHCKGTDVSKWIKDCKL</sequence>
<feature type="chain" id="PRO_0000208864" description="Lysozyme C">
    <location>
        <begin position="1"/>
        <end position="129"/>
    </location>
</feature>
<feature type="domain" description="C-type lysozyme" evidence="2">
    <location>
        <begin position="1"/>
        <end position="129"/>
    </location>
</feature>
<feature type="active site" evidence="2">
    <location>
        <position position="35"/>
    </location>
</feature>
<feature type="active site" evidence="2">
    <location>
        <position position="52"/>
    </location>
</feature>
<feature type="disulfide bond" evidence="2">
    <location>
        <begin position="6"/>
        <end position="127"/>
    </location>
</feature>
<feature type="disulfide bond" evidence="2">
    <location>
        <begin position="30"/>
        <end position="115"/>
    </location>
</feature>
<feature type="disulfide bond" evidence="2">
    <location>
        <begin position="64"/>
        <end position="80"/>
    </location>
</feature>
<feature type="disulfide bond" evidence="2">
    <location>
        <begin position="76"/>
        <end position="94"/>
    </location>
</feature>